<keyword id="KW-0067">ATP-binding</keyword>
<keyword id="KW-0963">Cytoplasm</keyword>
<keyword id="KW-0418">Kinase</keyword>
<keyword id="KW-0460">Magnesium</keyword>
<keyword id="KW-0479">Metal-binding</keyword>
<keyword id="KW-0546">Nucleotide metabolism</keyword>
<keyword id="KW-0547">Nucleotide-binding</keyword>
<keyword id="KW-0597">Phosphoprotein</keyword>
<keyword id="KW-1185">Reference proteome</keyword>
<keyword id="KW-0808">Transferase</keyword>
<evidence type="ECO:0000255" key="1">
    <source>
        <dbReference type="HAMAP-Rule" id="MF_00451"/>
    </source>
</evidence>
<comment type="function">
    <text evidence="1">Major role in the synthesis of nucleoside triphosphates other than ATP. The ATP gamma phosphate is transferred to the NDP beta phosphate via a ping-pong mechanism, using a phosphorylated active-site intermediate.</text>
</comment>
<comment type="catalytic activity">
    <reaction evidence="1">
        <text>a 2'-deoxyribonucleoside 5'-diphosphate + ATP = a 2'-deoxyribonucleoside 5'-triphosphate + ADP</text>
        <dbReference type="Rhea" id="RHEA:44640"/>
        <dbReference type="ChEBI" id="CHEBI:30616"/>
        <dbReference type="ChEBI" id="CHEBI:61560"/>
        <dbReference type="ChEBI" id="CHEBI:73316"/>
        <dbReference type="ChEBI" id="CHEBI:456216"/>
        <dbReference type="EC" id="2.7.4.6"/>
    </reaction>
</comment>
<comment type="catalytic activity">
    <reaction evidence="1">
        <text>a ribonucleoside 5'-diphosphate + ATP = a ribonucleoside 5'-triphosphate + ADP</text>
        <dbReference type="Rhea" id="RHEA:18113"/>
        <dbReference type="ChEBI" id="CHEBI:30616"/>
        <dbReference type="ChEBI" id="CHEBI:57930"/>
        <dbReference type="ChEBI" id="CHEBI:61557"/>
        <dbReference type="ChEBI" id="CHEBI:456216"/>
        <dbReference type="EC" id="2.7.4.6"/>
    </reaction>
</comment>
<comment type="cofactor">
    <cofactor evidence="1">
        <name>Mg(2+)</name>
        <dbReference type="ChEBI" id="CHEBI:18420"/>
    </cofactor>
</comment>
<comment type="subunit">
    <text evidence="1">Homotetramer.</text>
</comment>
<comment type="subcellular location">
    <subcellularLocation>
        <location evidence="1">Cytoplasm</location>
    </subcellularLocation>
</comment>
<comment type="similarity">
    <text evidence="1">Belongs to the NDK family.</text>
</comment>
<organism>
    <name type="scientific">Streptococcus agalactiae serotype V (strain ATCC BAA-611 / 2603 V/R)</name>
    <dbReference type="NCBI Taxonomy" id="208435"/>
    <lineage>
        <taxon>Bacteria</taxon>
        <taxon>Bacillati</taxon>
        <taxon>Bacillota</taxon>
        <taxon>Bacilli</taxon>
        <taxon>Lactobacillales</taxon>
        <taxon>Streptococcaceae</taxon>
        <taxon>Streptococcus</taxon>
    </lineage>
</organism>
<proteinExistence type="inferred from homology"/>
<sequence length="138" mass="15441">MEQTFFMIKPDGVKRGFIGEVISRIERRGFSIDRLEVRYADADILKRHYAELTDRPFFPTLVDYMTSGPVIIGVISGEEVISTWRTMMGSTNPKDALPGTIRGDFAQAPSPNQATCNIVHGSDSPESATREIAIWFNN</sequence>
<reference key="1">
    <citation type="journal article" date="2002" name="Proc. Natl. Acad. Sci. U.S.A.">
        <title>Complete genome sequence and comparative genomic analysis of an emerging human pathogen, serotype V Streptococcus agalactiae.</title>
        <authorList>
            <person name="Tettelin H."/>
            <person name="Masignani V."/>
            <person name="Cieslewicz M.J."/>
            <person name="Eisen J.A."/>
            <person name="Peterson S.N."/>
            <person name="Wessels M.R."/>
            <person name="Paulsen I.T."/>
            <person name="Nelson K.E."/>
            <person name="Margarit I."/>
            <person name="Read T.D."/>
            <person name="Madoff L.C."/>
            <person name="Wolf A.M."/>
            <person name="Beanan M.J."/>
            <person name="Brinkac L.M."/>
            <person name="Daugherty S.C."/>
            <person name="DeBoy R.T."/>
            <person name="Durkin A.S."/>
            <person name="Kolonay J.F."/>
            <person name="Madupu R."/>
            <person name="Lewis M.R."/>
            <person name="Radune D."/>
            <person name="Fedorova N.B."/>
            <person name="Scanlan D."/>
            <person name="Khouri H.M."/>
            <person name="Mulligan S."/>
            <person name="Carty H.A."/>
            <person name="Cline R.T."/>
            <person name="Van Aken S.E."/>
            <person name="Gill J."/>
            <person name="Scarselli M."/>
            <person name="Mora M."/>
            <person name="Iacobini E.T."/>
            <person name="Brettoni C."/>
            <person name="Galli G."/>
            <person name="Mariani M."/>
            <person name="Vegni F."/>
            <person name="Maione D."/>
            <person name="Rinaudo D."/>
            <person name="Rappuoli R."/>
            <person name="Telford J.L."/>
            <person name="Kasper D.L."/>
            <person name="Grandi G."/>
            <person name="Fraser C.M."/>
        </authorList>
    </citation>
    <scope>NUCLEOTIDE SEQUENCE [LARGE SCALE GENOMIC DNA]</scope>
    <source>
        <strain>ATCC BAA-611 / 2603 V/R</strain>
    </source>
</reference>
<name>NDK_STRA5</name>
<gene>
    <name evidence="1" type="primary">ndk</name>
    <name type="ordered locus">SAG0905</name>
</gene>
<feature type="chain" id="PRO_0000137054" description="Nucleoside diphosphate kinase">
    <location>
        <begin position="1"/>
        <end position="138"/>
    </location>
</feature>
<feature type="active site" description="Pros-phosphohistidine intermediate" evidence="1">
    <location>
        <position position="120"/>
    </location>
</feature>
<feature type="binding site" evidence="1">
    <location>
        <position position="9"/>
    </location>
    <ligand>
        <name>ATP</name>
        <dbReference type="ChEBI" id="CHEBI:30616"/>
    </ligand>
</feature>
<feature type="binding site" evidence="1">
    <location>
        <position position="57"/>
    </location>
    <ligand>
        <name>ATP</name>
        <dbReference type="ChEBI" id="CHEBI:30616"/>
    </ligand>
</feature>
<feature type="binding site" evidence="1">
    <location>
        <position position="85"/>
    </location>
    <ligand>
        <name>ATP</name>
        <dbReference type="ChEBI" id="CHEBI:30616"/>
    </ligand>
</feature>
<feature type="binding site" evidence="1">
    <location>
        <position position="91"/>
    </location>
    <ligand>
        <name>ATP</name>
        <dbReference type="ChEBI" id="CHEBI:30616"/>
    </ligand>
</feature>
<feature type="binding site" evidence="1">
    <location>
        <position position="102"/>
    </location>
    <ligand>
        <name>ATP</name>
        <dbReference type="ChEBI" id="CHEBI:30616"/>
    </ligand>
</feature>
<feature type="binding site" evidence="1">
    <location>
        <position position="112"/>
    </location>
    <ligand>
        <name>ATP</name>
        <dbReference type="ChEBI" id="CHEBI:30616"/>
    </ligand>
</feature>
<accession>Q8E031</accession>
<protein>
    <recommendedName>
        <fullName evidence="1">Nucleoside diphosphate kinase</fullName>
        <shortName evidence="1">NDK</shortName>
        <shortName evidence="1">NDP kinase</shortName>
        <ecNumber evidence="1">2.7.4.6</ecNumber>
    </recommendedName>
    <alternativeName>
        <fullName evidence="1">Nucleoside-2-P kinase</fullName>
    </alternativeName>
</protein>
<dbReference type="EC" id="2.7.4.6" evidence="1"/>
<dbReference type="EMBL" id="AE009948">
    <property type="protein sequence ID" value="AAM99791.1"/>
    <property type="molecule type" value="Genomic_DNA"/>
</dbReference>
<dbReference type="RefSeq" id="NP_687919.1">
    <property type="nucleotide sequence ID" value="NC_004116.1"/>
</dbReference>
<dbReference type="RefSeq" id="WP_000438314.1">
    <property type="nucleotide sequence ID" value="NC_004116.1"/>
</dbReference>
<dbReference type="SMR" id="Q8E031"/>
<dbReference type="STRING" id="208435.SAG0905"/>
<dbReference type="KEGG" id="sag:SAG0905"/>
<dbReference type="PATRIC" id="fig|208435.3.peg.910"/>
<dbReference type="HOGENOM" id="CLU_060216_6_3_9"/>
<dbReference type="OrthoDB" id="9801161at2"/>
<dbReference type="Proteomes" id="UP000000821">
    <property type="component" value="Chromosome"/>
</dbReference>
<dbReference type="GO" id="GO:0005737">
    <property type="term" value="C:cytoplasm"/>
    <property type="evidence" value="ECO:0007669"/>
    <property type="project" value="UniProtKB-SubCell"/>
</dbReference>
<dbReference type="GO" id="GO:0005524">
    <property type="term" value="F:ATP binding"/>
    <property type="evidence" value="ECO:0007669"/>
    <property type="project" value="UniProtKB-UniRule"/>
</dbReference>
<dbReference type="GO" id="GO:0046872">
    <property type="term" value="F:metal ion binding"/>
    <property type="evidence" value="ECO:0007669"/>
    <property type="project" value="UniProtKB-KW"/>
</dbReference>
<dbReference type="GO" id="GO:0004550">
    <property type="term" value="F:nucleoside diphosphate kinase activity"/>
    <property type="evidence" value="ECO:0007669"/>
    <property type="project" value="UniProtKB-UniRule"/>
</dbReference>
<dbReference type="GO" id="GO:0006241">
    <property type="term" value="P:CTP biosynthetic process"/>
    <property type="evidence" value="ECO:0007669"/>
    <property type="project" value="UniProtKB-UniRule"/>
</dbReference>
<dbReference type="GO" id="GO:0006183">
    <property type="term" value="P:GTP biosynthetic process"/>
    <property type="evidence" value="ECO:0007669"/>
    <property type="project" value="UniProtKB-UniRule"/>
</dbReference>
<dbReference type="GO" id="GO:0006228">
    <property type="term" value="P:UTP biosynthetic process"/>
    <property type="evidence" value="ECO:0007669"/>
    <property type="project" value="UniProtKB-UniRule"/>
</dbReference>
<dbReference type="CDD" id="cd04413">
    <property type="entry name" value="NDPk_I"/>
    <property type="match status" value="1"/>
</dbReference>
<dbReference type="FunFam" id="3.30.70.141:FF:000003">
    <property type="entry name" value="Nucleoside diphosphate kinase"/>
    <property type="match status" value="1"/>
</dbReference>
<dbReference type="Gene3D" id="3.30.70.141">
    <property type="entry name" value="Nucleoside diphosphate kinase-like domain"/>
    <property type="match status" value="1"/>
</dbReference>
<dbReference type="HAMAP" id="MF_00451">
    <property type="entry name" value="NDP_kinase"/>
    <property type="match status" value="1"/>
</dbReference>
<dbReference type="InterPro" id="IPR034907">
    <property type="entry name" value="NDK-like_dom"/>
</dbReference>
<dbReference type="InterPro" id="IPR036850">
    <property type="entry name" value="NDK-like_dom_sf"/>
</dbReference>
<dbReference type="InterPro" id="IPR001564">
    <property type="entry name" value="Nucleoside_diP_kinase"/>
</dbReference>
<dbReference type="InterPro" id="IPR023005">
    <property type="entry name" value="Nucleoside_diP_kinase_AS"/>
</dbReference>
<dbReference type="NCBIfam" id="NF001908">
    <property type="entry name" value="PRK00668.1"/>
    <property type="match status" value="1"/>
</dbReference>
<dbReference type="PANTHER" id="PTHR11349">
    <property type="entry name" value="NUCLEOSIDE DIPHOSPHATE KINASE"/>
    <property type="match status" value="1"/>
</dbReference>
<dbReference type="Pfam" id="PF00334">
    <property type="entry name" value="NDK"/>
    <property type="match status" value="1"/>
</dbReference>
<dbReference type="PRINTS" id="PR01243">
    <property type="entry name" value="NUCDPKINASE"/>
</dbReference>
<dbReference type="SMART" id="SM00562">
    <property type="entry name" value="NDK"/>
    <property type="match status" value="1"/>
</dbReference>
<dbReference type="SUPFAM" id="SSF54919">
    <property type="entry name" value="Nucleoside diphosphate kinase, NDK"/>
    <property type="match status" value="1"/>
</dbReference>
<dbReference type="PROSITE" id="PS00469">
    <property type="entry name" value="NDPK"/>
    <property type="match status" value="1"/>
</dbReference>
<dbReference type="PROSITE" id="PS51374">
    <property type="entry name" value="NDPK_LIKE"/>
    <property type="match status" value="1"/>
</dbReference>